<sequence>MGFTDETVRFNLDDGDKKQISETLTAVYHSLDEKGYNPINQIVGYVLSGDPAYVPRYNDARNQIRKYERDEIVEELVRYYLQGNGIDIR</sequence>
<accession>C0MGB4</accession>
<proteinExistence type="inferred from homology"/>
<protein>
    <recommendedName>
        <fullName evidence="1">UPF0297 protein SZO_18620</fullName>
    </recommendedName>
</protein>
<gene>
    <name type="ordered locus">SZO_18620</name>
</gene>
<feature type="chain" id="PRO_1000215338" description="UPF0297 protein SZO_18620">
    <location>
        <begin position="1"/>
        <end position="89"/>
    </location>
</feature>
<dbReference type="EMBL" id="FM204884">
    <property type="protein sequence ID" value="CAX00791.1"/>
    <property type="molecule type" value="Genomic_DNA"/>
</dbReference>
<dbReference type="SMR" id="C0MGB4"/>
<dbReference type="KEGG" id="seq:SZO_18620"/>
<dbReference type="eggNOG" id="COG4472">
    <property type="taxonomic scope" value="Bacteria"/>
</dbReference>
<dbReference type="HOGENOM" id="CLU_162466_0_0_9"/>
<dbReference type="Proteomes" id="UP000001368">
    <property type="component" value="Chromosome"/>
</dbReference>
<dbReference type="HAMAP" id="MF_01507">
    <property type="entry name" value="UPF0297"/>
    <property type="match status" value="1"/>
</dbReference>
<dbReference type="InterPro" id="IPR009309">
    <property type="entry name" value="IreB"/>
</dbReference>
<dbReference type="NCBIfam" id="NF003997">
    <property type="entry name" value="PRK05473.1"/>
    <property type="match status" value="1"/>
</dbReference>
<dbReference type="PANTHER" id="PTHR40067">
    <property type="entry name" value="UPF0297 PROTEIN YRZL"/>
    <property type="match status" value="1"/>
</dbReference>
<dbReference type="PANTHER" id="PTHR40067:SF1">
    <property type="entry name" value="UPF0297 PROTEIN YRZL"/>
    <property type="match status" value="1"/>
</dbReference>
<dbReference type="Pfam" id="PF06135">
    <property type="entry name" value="IreB"/>
    <property type="match status" value="1"/>
</dbReference>
<dbReference type="PIRSF" id="PIRSF037258">
    <property type="entry name" value="DUF965_bac"/>
    <property type="match status" value="1"/>
</dbReference>
<comment type="similarity">
    <text evidence="1">Belongs to the UPF0297 family.</text>
</comment>
<name>Y1862_STRS7</name>
<evidence type="ECO:0000255" key="1">
    <source>
        <dbReference type="HAMAP-Rule" id="MF_01507"/>
    </source>
</evidence>
<organism>
    <name type="scientific">Streptococcus equi subsp. zooepidemicus (strain H70)</name>
    <dbReference type="NCBI Taxonomy" id="553483"/>
    <lineage>
        <taxon>Bacteria</taxon>
        <taxon>Bacillati</taxon>
        <taxon>Bacillota</taxon>
        <taxon>Bacilli</taxon>
        <taxon>Lactobacillales</taxon>
        <taxon>Streptococcaceae</taxon>
        <taxon>Streptococcus</taxon>
    </lineage>
</organism>
<reference key="1">
    <citation type="journal article" date="2009" name="PLoS Pathog.">
        <title>Genomic evidence for the evolution of Streptococcus equi: host restriction, increased virulence, and genetic exchange with human pathogens.</title>
        <authorList>
            <person name="Holden M.T.G."/>
            <person name="Heather Z."/>
            <person name="Paillot R."/>
            <person name="Steward K.F."/>
            <person name="Webb K."/>
            <person name="Ainslie F."/>
            <person name="Jourdan T."/>
            <person name="Bason N.C."/>
            <person name="Holroyd N.E."/>
            <person name="Mungall K."/>
            <person name="Quail M.A."/>
            <person name="Sanders M."/>
            <person name="Simmonds M."/>
            <person name="Willey D."/>
            <person name="Brooks K."/>
            <person name="Aanensen D.M."/>
            <person name="Spratt B.G."/>
            <person name="Jolley K.A."/>
            <person name="Maiden M.C.J."/>
            <person name="Kehoe M."/>
            <person name="Chanter N."/>
            <person name="Bentley S.D."/>
            <person name="Robinson C."/>
            <person name="Maskell D.J."/>
            <person name="Parkhill J."/>
            <person name="Waller A.S."/>
        </authorList>
    </citation>
    <scope>NUCLEOTIDE SEQUENCE [LARGE SCALE GENOMIC DNA]</scope>
    <source>
        <strain>H70</strain>
    </source>
</reference>